<organismHost>
    <name type="scientific">Homo sapiens</name>
    <name type="common">Human</name>
    <dbReference type="NCBI Taxonomy" id="9606"/>
</organismHost>
<organismHost>
    <name type="scientific">Myodes glareolus</name>
    <name type="common">Bank vole</name>
    <name type="synonym">Clethrionomys glareolus</name>
    <dbReference type="NCBI Taxonomy" id="447135"/>
</organismHost>
<organism>
    <name type="scientific">Puumala virus (strain Bank vole/Russia/CG1820/1984)</name>
    <dbReference type="NCBI Taxonomy" id="1337063"/>
    <lineage>
        <taxon>Viruses</taxon>
        <taxon>Riboviria</taxon>
        <taxon>Orthornavirae</taxon>
        <taxon>Negarnaviricota</taxon>
        <taxon>Polyploviricotina</taxon>
        <taxon>Ellioviricetes</taxon>
        <taxon>Bunyavirales</taxon>
        <taxon>Hantaviridae</taxon>
        <taxon>Mammantavirinae</taxon>
        <taxon>Orthohantavirus</taxon>
        <taxon>Orthohantavirus puumalaense</taxon>
    </lineage>
</organism>
<gene>
    <name type="primary">N</name>
</gene>
<sequence>MSNNLLLPDKNSRMQREQWKWTRMTLTRAHYKQDNKQCQHWRINSQTTREEWQMLCPGRKWILNLLTRLGLNLMIISRRDQALDMEMSLM</sequence>
<evidence type="ECO:0000250" key="1">
    <source>
        <dbReference type="UniProtKB" id="I4EPA3"/>
    </source>
</evidence>
<evidence type="ECO:0000250" key="2">
    <source>
        <dbReference type="UniProtKB" id="P0DTK1"/>
    </source>
</evidence>
<evidence type="ECO:0000250" key="3">
    <source>
        <dbReference type="UniProtKB" id="Q80DP8"/>
    </source>
</evidence>
<evidence type="ECO:0000305" key="4"/>
<evidence type="ECO:0000305" key="5">
    <source>
    </source>
</evidence>
<dbReference type="EMBL" id="M32750">
    <property type="status" value="NOT_ANNOTATED_CDS"/>
    <property type="molecule type" value="Genomic_RNA"/>
</dbReference>
<dbReference type="Proteomes" id="UP000008481">
    <property type="component" value="Genome"/>
</dbReference>
<dbReference type="GO" id="GO:0044220">
    <property type="term" value="C:host cell perinuclear region of cytoplasm"/>
    <property type="evidence" value="ECO:0007669"/>
    <property type="project" value="UniProtKB-SubCell"/>
</dbReference>
<dbReference type="GO" id="GO:0052170">
    <property type="term" value="P:symbiont-mediated suppression of host innate immune response"/>
    <property type="evidence" value="ECO:0007669"/>
    <property type="project" value="UniProtKB-KW"/>
</dbReference>
<reference key="1">
    <citation type="journal article" date="1990" name="Virology">
        <title>Molecular characterization of the RNA S segment of nephropathia epidemica virus strain Hallnas B1.</title>
        <authorList>
            <person name="Stohwasser R."/>
            <person name="Giebel L.B."/>
            <person name="Zoeller L."/>
            <person name="Bautz E.K.F."/>
            <person name="Darai G."/>
        </authorList>
    </citation>
    <scope>NUCLEOTIDE SEQUENCE [GENOMIC RNA]</scope>
</reference>
<feature type="chain" id="PRO_0000423149" description="Non-structural protein NS-S">
    <location>
        <begin position="1"/>
        <end position="90"/>
    </location>
</feature>
<proteinExistence type="inferred from homology"/>
<accession>P0DJX5</accession>
<keyword id="KW-1035">Host cytoplasm</keyword>
<keyword id="KW-0945">Host-virus interaction</keyword>
<keyword id="KW-1090">Inhibition of host innate immune response by virus</keyword>
<keyword id="KW-1113">Inhibition of host RLR pathway by virus</keyword>
<keyword id="KW-0899">Viral immunoevasion</keyword>
<name>NSS_PUUMG</name>
<comment type="function">
    <text evidence="1">Antagonizes host type-I IFN signaling pathway.</text>
</comment>
<comment type="subcellular location">
    <subcellularLocation>
        <location evidence="2">Host cytoplasm</location>
        <location evidence="2">Host perinuclear region</location>
    </subcellularLocation>
    <subcellularLocation>
        <location evidence="1">Host cytoplasm</location>
    </subcellularLocation>
</comment>
<comment type="miscellaneous">
    <text evidence="3">Expressed from the S segment by a leaky scanning mechanism.</text>
</comment>
<comment type="similarity">
    <text evidence="4">Belongs to the hantavirus NS-S protein family.</text>
</comment>
<comment type="caution">
    <text evidence="5">The sequence was wrongly described as Hallnas B1 strain.</text>
</comment>
<protein>
    <recommendedName>
        <fullName>Non-structural protein NS-S</fullName>
        <shortName>NSs</shortName>
    </recommendedName>
</protein>